<protein>
    <recommendedName>
        <fullName evidence="1">Probable cell division protein WhiA</fullName>
    </recommendedName>
</protein>
<feature type="chain" id="PRO_0000376552" description="Probable cell division protein WhiA">
    <location>
        <begin position="1"/>
        <end position="314"/>
    </location>
</feature>
<feature type="DNA-binding region" description="H-T-H motif" evidence="1">
    <location>
        <begin position="274"/>
        <end position="308"/>
    </location>
</feature>
<organism>
    <name type="scientific">Staphylococcus aureus (strain COL)</name>
    <dbReference type="NCBI Taxonomy" id="93062"/>
    <lineage>
        <taxon>Bacteria</taxon>
        <taxon>Bacillati</taxon>
        <taxon>Bacillota</taxon>
        <taxon>Bacilli</taxon>
        <taxon>Bacillales</taxon>
        <taxon>Staphylococcaceae</taxon>
        <taxon>Staphylococcus</taxon>
    </lineage>
</organism>
<name>WHIA_STAAC</name>
<keyword id="KW-0131">Cell cycle</keyword>
<keyword id="KW-0132">Cell division</keyword>
<keyword id="KW-0238">DNA-binding</keyword>
<comment type="function">
    <text evidence="1">Involved in cell division and chromosome segregation.</text>
</comment>
<comment type="similarity">
    <text evidence="1">Belongs to the WhiA family.</text>
</comment>
<evidence type="ECO:0000255" key="1">
    <source>
        <dbReference type="HAMAP-Rule" id="MF_01420"/>
    </source>
</evidence>
<proteinExistence type="inferred from homology"/>
<dbReference type="EMBL" id="Y14324">
    <property type="protein sequence ID" value="CAB82471.1"/>
    <property type="molecule type" value="Genomic_DNA"/>
</dbReference>
<dbReference type="EMBL" id="CP000046">
    <property type="protein sequence ID" value="AAW36388.1"/>
    <property type="molecule type" value="Genomic_DNA"/>
</dbReference>
<dbReference type="RefSeq" id="WP_000006551.1">
    <property type="nucleotide sequence ID" value="NZ_JBGOFO010000005.1"/>
</dbReference>
<dbReference type="SMR" id="Q5HHQ1"/>
<dbReference type="KEGG" id="sac:SACOL0832"/>
<dbReference type="HOGENOM" id="CLU_053282_0_0_9"/>
<dbReference type="Proteomes" id="UP000000530">
    <property type="component" value="Chromosome"/>
</dbReference>
<dbReference type="GO" id="GO:0003677">
    <property type="term" value="F:DNA binding"/>
    <property type="evidence" value="ECO:0007669"/>
    <property type="project" value="UniProtKB-UniRule"/>
</dbReference>
<dbReference type="GO" id="GO:0051301">
    <property type="term" value="P:cell division"/>
    <property type="evidence" value="ECO:0007669"/>
    <property type="project" value="UniProtKB-UniRule"/>
</dbReference>
<dbReference type="GO" id="GO:0043937">
    <property type="term" value="P:regulation of sporulation"/>
    <property type="evidence" value="ECO:0007669"/>
    <property type="project" value="InterPro"/>
</dbReference>
<dbReference type="FunFam" id="3.10.28.10:FF:000002">
    <property type="entry name" value="Probable cell division protein WhiA"/>
    <property type="match status" value="1"/>
</dbReference>
<dbReference type="Gene3D" id="3.10.28.10">
    <property type="entry name" value="Homing endonucleases"/>
    <property type="match status" value="1"/>
</dbReference>
<dbReference type="HAMAP" id="MF_01420">
    <property type="entry name" value="HTH_type_WhiA"/>
    <property type="match status" value="1"/>
</dbReference>
<dbReference type="InterPro" id="IPR027434">
    <property type="entry name" value="Homing_endonucl"/>
</dbReference>
<dbReference type="InterPro" id="IPR018478">
    <property type="entry name" value="Sporu_reg_WhiA_N_dom"/>
</dbReference>
<dbReference type="InterPro" id="IPR003802">
    <property type="entry name" value="Sporulation_regulator_WhiA"/>
</dbReference>
<dbReference type="InterPro" id="IPR023054">
    <property type="entry name" value="Sporulation_regulator_WhiA_C"/>
</dbReference>
<dbReference type="InterPro" id="IPR039518">
    <property type="entry name" value="WhiA_LAGLIDADG_dom"/>
</dbReference>
<dbReference type="NCBIfam" id="TIGR00647">
    <property type="entry name" value="DNA_bind_WhiA"/>
    <property type="match status" value="1"/>
</dbReference>
<dbReference type="PANTHER" id="PTHR37307">
    <property type="entry name" value="CELL DIVISION PROTEIN WHIA-RELATED"/>
    <property type="match status" value="1"/>
</dbReference>
<dbReference type="PANTHER" id="PTHR37307:SF1">
    <property type="entry name" value="CELL DIVISION PROTEIN WHIA-RELATED"/>
    <property type="match status" value="1"/>
</dbReference>
<dbReference type="Pfam" id="PF02650">
    <property type="entry name" value="HTH_WhiA"/>
    <property type="match status" value="1"/>
</dbReference>
<dbReference type="Pfam" id="PF14527">
    <property type="entry name" value="LAGLIDADG_WhiA"/>
    <property type="match status" value="1"/>
</dbReference>
<dbReference type="Pfam" id="PF10298">
    <property type="entry name" value="WhiA_N"/>
    <property type="match status" value="1"/>
</dbReference>
<dbReference type="SUPFAM" id="SSF55608">
    <property type="entry name" value="Homing endonucleases"/>
    <property type="match status" value="1"/>
</dbReference>
<sequence length="314" mass="35868">MSFASEMKNELTRIDVDEMNAKAELSALIRMNGALSLSNQQFVINVQTENATTARRIYSLIKRVFNVEVEILVRKKMKLKKNNIYICRTKMKAKEILDELGILKDGIFTHEIDHSMIQDDEMRRSYLRGAFLAGGSVNNPETSSYHLEIFSQNESHAEGLTKLMNSYELNAKHLERKKGSITYLKEAEKISDFLSLIGGYQALLKFEDVRIVRDMRNSVNRLVNCETANLNKTVSAAMKQVESIKLIDKEIGIENLPDRLREIARIRVEHQEISLKELGEMVSTGPISKSGVNHRLRKLNDLADKIRNGEQIEL</sequence>
<accession>Q5HHQ1</accession>
<accession>Q9KX04</accession>
<gene>
    <name evidence="1" type="primary">whiA</name>
    <name type="ordered locus">SACOL0832</name>
</gene>
<reference key="1">
    <citation type="journal article" date="1999" name="Microb. Drug Resist.">
        <title>Antibiotic resistance as a stress response: complete sequencing of a large number of chromosomal loci in Staphylococcus aureus strain COL that impact on the expression of resistance to methicillin.</title>
        <authorList>
            <person name="de Lencastre H."/>
            <person name="Wu S.-W."/>
            <person name="Pinho M.G."/>
            <person name="Ludovice A.M."/>
            <person name="Filipe S."/>
            <person name="Gardete S."/>
            <person name="Sobral R."/>
            <person name="Gill S.R."/>
            <person name="Chung M."/>
            <person name="Tomasz A."/>
        </authorList>
    </citation>
    <scope>NUCLEOTIDE SEQUENCE [GENOMIC DNA]</scope>
</reference>
<reference key="2">
    <citation type="journal article" date="2005" name="J. Bacteriol.">
        <title>Insights on evolution of virulence and resistance from the complete genome analysis of an early methicillin-resistant Staphylococcus aureus strain and a biofilm-producing methicillin-resistant Staphylococcus epidermidis strain.</title>
        <authorList>
            <person name="Gill S.R."/>
            <person name="Fouts D.E."/>
            <person name="Archer G.L."/>
            <person name="Mongodin E.F."/>
            <person name="DeBoy R.T."/>
            <person name="Ravel J."/>
            <person name="Paulsen I.T."/>
            <person name="Kolonay J.F."/>
            <person name="Brinkac L.M."/>
            <person name="Beanan M.J."/>
            <person name="Dodson R.J."/>
            <person name="Daugherty S.C."/>
            <person name="Madupu R."/>
            <person name="Angiuoli S.V."/>
            <person name="Durkin A.S."/>
            <person name="Haft D.H."/>
            <person name="Vamathevan J.J."/>
            <person name="Khouri H."/>
            <person name="Utterback T.R."/>
            <person name="Lee C."/>
            <person name="Dimitrov G."/>
            <person name="Jiang L."/>
            <person name="Qin H."/>
            <person name="Weidman J."/>
            <person name="Tran K."/>
            <person name="Kang K.H."/>
            <person name="Hance I.R."/>
            <person name="Nelson K.E."/>
            <person name="Fraser C.M."/>
        </authorList>
    </citation>
    <scope>NUCLEOTIDE SEQUENCE [LARGE SCALE GENOMIC DNA]</scope>
    <source>
        <strain>COL</strain>
    </source>
</reference>